<protein>
    <recommendedName>
        <fullName>Disintegrin leucogastin-A</fullName>
    </recommendedName>
</protein>
<feature type="chain" id="PRO_0000329989" description="Disintegrin leucogastin-A">
    <location>
        <begin position="1"/>
        <end position="48"/>
    </location>
</feature>
<feature type="domain" description="Disintegrin" evidence="2">
    <location>
        <begin position="1"/>
        <end position="47"/>
    </location>
</feature>
<feature type="short sequence motif" description="Cell attachment site">
    <location>
        <begin position="24"/>
        <end position="26"/>
    </location>
</feature>
<feature type="disulfide bond" evidence="2">
    <location>
        <begin position="2"/>
        <end position="11"/>
    </location>
</feature>
<feature type="disulfide bond" evidence="2">
    <location>
        <begin position="7"/>
        <end position="32"/>
    </location>
</feature>
<feature type="disulfide bond" evidence="2">
    <location>
        <begin position="8"/>
        <end position="37"/>
    </location>
</feature>
<feature type="disulfide bond" evidence="2">
    <location>
        <begin position="20"/>
        <end position="39"/>
    </location>
</feature>
<keyword id="KW-1217">Cell adhesion impairing toxin</keyword>
<keyword id="KW-0903">Direct protein sequencing</keyword>
<keyword id="KW-1015">Disulfide bond</keyword>
<keyword id="KW-1199">Hemostasis impairing toxin</keyword>
<keyword id="KW-1201">Platelet aggregation inhibiting toxin</keyword>
<keyword id="KW-0964">Secreted</keyword>
<keyword id="KW-0800">Toxin</keyword>
<organism>
    <name type="scientific">Echis leucogaster</name>
    <name type="common">Roman's saw-scaled viper</name>
    <name type="synonym">Echis carinatus leucogaster</name>
    <dbReference type="NCBI Taxonomy" id="504457"/>
    <lineage>
        <taxon>Eukaryota</taxon>
        <taxon>Metazoa</taxon>
        <taxon>Chordata</taxon>
        <taxon>Craniata</taxon>
        <taxon>Vertebrata</taxon>
        <taxon>Euteleostomi</taxon>
        <taxon>Lepidosauria</taxon>
        <taxon>Squamata</taxon>
        <taxon>Bifurcata</taxon>
        <taxon>Unidentata</taxon>
        <taxon>Episquamata</taxon>
        <taxon>Toxicofera</taxon>
        <taxon>Serpentes</taxon>
        <taxon>Colubroidea</taxon>
        <taxon>Viperidae</taxon>
        <taxon>Viperinae</taxon>
        <taxon>Echis</taxon>
    </lineage>
</organism>
<evidence type="ECO:0000250" key="1"/>
<evidence type="ECO:0000255" key="2">
    <source>
        <dbReference type="PROSITE-ProRule" id="PRU00068"/>
    </source>
</evidence>
<evidence type="ECO:0000269" key="3">
    <source>
    </source>
</evidence>
<evidence type="ECO:0000305" key="4"/>
<proteinExistence type="evidence at protein level"/>
<dbReference type="SMR" id="P0C7A7"/>
<dbReference type="GO" id="GO:0005576">
    <property type="term" value="C:extracellular region"/>
    <property type="evidence" value="ECO:0007669"/>
    <property type="project" value="UniProtKB-SubCell"/>
</dbReference>
<dbReference type="GO" id="GO:0090729">
    <property type="term" value="F:toxin activity"/>
    <property type="evidence" value="ECO:0007669"/>
    <property type="project" value="UniProtKB-KW"/>
</dbReference>
<dbReference type="Gene3D" id="4.10.70.10">
    <property type="entry name" value="Disintegrin domain"/>
    <property type="match status" value="1"/>
</dbReference>
<dbReference type="InterPro" id="IPR018358">
    <property type="entry name" value="Disintegrin_CS"/>
</dbReference>
<dbReference type="InterPro" id="IPR001762">
    <property type="entry name" value="Disintegrin_dom"/>
</dbReference>
<dbReference type="InterPro" id="IPR036436">
    <property type="entry name" value="Disintegrin_dom_sf"/>
</dbReference>
<dbReference type="PRINTS" id="PR00289">
    <property type="entry name" value="DISINTEGRIN"/>
</dbReference>
<dbReference type="SMART" id="SM00050">
    <property type="entry name" value="DISIN"/>
    <property type="match status" value="1"/>
</dbReference>
<dbReference type="SUPFAM" id="SSF57552">
    <property type="entry name" value="Blood coagulation inhibitor (disintegrin)"/>
    <property type="match status" value="1"/>
</dbReference>
<dbReference type="PROSITE" id="PS00427">
    <property type="entry name" value="DISINTEGRIN_1"/>
    <property type="match status" value="1"/>
</dbReference>
<dbReference type="PROSITE" id="PS50214">
    <property type="entry name" value="DISINTEGRIN_2"/>
    <property type="match status" value="1"/>
</dbReference>
<reference key="1">
    <citation type="journal article" date="2001" name="J. Biochem.">
        <title>Comparative biochemistry of disintegrins isolated from snake venom: consideration of the taxonomy and geographical distribution of snakes in the genus Echis.</title>
        <authorList>
            <person name="Okuda D."/>
            <person name="Nozaki C."/>
            <person name="Sekiya F."/>
            <person name="Morita T."/>
        </authorList>
    </citation>
    <scope>PROTEIN SEQUENCE</scope>
    <scope>FUNCTION</scope>
    <source>
        <tissue>Venom</tissue>
    </source>
</reference>
<accession>P0C7A7</accession>
<comment type="function">
    <text evidence="3">Inhibits ADP-induced human platelet aggregation.</text>
</comment>
<comment type="subunit">
    <text evidence="1">Monomer (disintegrin).</text>
</comment>
<comment type="subcellular location">
    <subcellularLocation>
        <location>Secreted</location>
    </subcellularLocation>
</comment>
<comment type="tissue specificity">
    <text>Expressed by the venom gland.</text>
</comment>
<comment type="miscellaneous">
    <text>The disintegrin belongs to the short disintegrin subfamily.</text>
</comment>
<comment type="similarity">
    <text evidence="4">Belongs to the venom metalloproteinase (M12B) family. P-II subfamily. P-IIa sub-subfamily.</text>
</comment>
<sequence>DCASGPCCRDCKFLEEFTICNMARGDDMNDYCNGKTCDCPRNPHKWPA</sequence>
<name>VM2LA_ECHLE</name>